<accession>Q75AL4</accession>
<proteinExistence type="inferred from homology"/>
<organism>
    <name type="scientific">Eremothecium gossypii (strain ATCC 10895 / CBS 109.51 / FGSC 9923 / NRRL Y-1056)</name>
    <name type="common">Yeast</name>
    <name type="synonym">Ashbya gossypii</name>
    <dbReference type="NCBI Taxonomy" id="284811"/>
    <lineage>
        <taxon>Eukaryota</taxon>
        <taxon>Fungi</taxon>
        <taxon>Dikarya</taxon>
        <taxon>Ascomycota</taxon>
        <taxon>Saccharomycotina</taxon>
        <taxon>Saccharomycetes</taxon>
        <taxon>Saccharomycetales</taxon>
        <taxon>Saccharomycetaceae</taxon>
        <taxon>Eremothecium</taxon>
    </lineage>
</organism>
<name>NCB5R_EREGS</name>
<dbReference type="EC" id="1.6.2.2" evidence="2"/>
<dbReference type="EMBL" id="AE016817">
    <property type="protein sequence ID" value="AAS51833.1"/>
    <property type="molecule type" value="Genomic_DNA"/>
</dbReference>
<dbReference type="RefSeq" id="NP_984009.1">
    <property type="nucleotide sequence ID" value="NM_209362.1"/>
</dbReference>
<dbReference type="SMR" id="Q75AL4"/>
<dbReference type="FunCoup" id="Q75AL4">
    <property type="interactions" value="263"/>
</dbReference>
<dbReference type="STRING" id="284811.Q75AL4"/>
<dbReference type="EnsemblFungi" id="AAS51833">
    <property type="protein sequence ID" value="AAS51833"/>
    <property type="gene ID" value="AGOS_ADL087W"/>
</dbReference>
<dbReference type="GeneID" id="4620151"/>
<dbReference type="KEGG" id="ago:AGOS_ADL087W"/>
<dbReference type="eggNOG" id="KOG0534">
    <property type="taxonomic scope" value="Eukaryota"/>
</dbReference>
<dbReference type="HOGENOM" id="CLU_003827_9_0_1"/>
<dbReference type="InParanoid" id="Q75AL4"/>
<dbReference type="OMA" id="LDMKGPF"/>
<dbReference type="OrthoDB" id="432685at2759"/>
<dbReference type="UniPathway" id="UPA00559"/>
<dbReference type="Proteomes" id="UP000000591">
    <property type="component" value="Chromosome IV"/>
</dbReference>
<dbReference type="GO" id="GO:0005741">
    <property type="term" value="C:mitochondrial outer membrane"/>
    <property type="evidence" value="ECO:0007669"/>
    <property type="project" value="UniProtKB-SubCell"/>
</dbReference>
<dbReference type="GO" id="GO:0005886">
    <property type="term" value="C:plasma membrane"/>
    <property type="evidence" value="ECO:0000318"/>
    <property type="project" value="GO_Central"/>
</dbReference>
<dbReference type="GO" id="GO:0090560">
    <property type="term" value="F:2-(3-amino-3-carboxypropyl)histidine synthase activity"/>
    <property type="evidence" value="ECO:0007669"/>
    <property type="project" value="EnsemblFungi"/>
</dbReference>
<dbReference type="GO" id="GO:0004128">
    <property type="term" value="F:cytochrome-b5 reductase activity, acting on NAD(P)H"/>
    <property type="evidence" value="ECO:0000250"/>
    <property type="project" value="UniProtKB"/>
</dbReference>
<dbReference type="GO" id="GO:0003954">
    <property type="term" value="F:NADH dehydrogenase activity"/>
    <property type="evidence" value="ECO:0000250"/>
    <property type="project" value="UniProtKB"/>
</dbReference>
<dbReference type="GO" id="GO:0017183">
    <property type="term" value="P:protein histidyl modification to diphthamide"/>
    <property type="evidence" value="ECO:0000250"/>
    <property type="project" value="UniProtKB"/>
</dbReference>
<dbReference type="GO" id="GO:0002926">
    <property type="term" value="P:tRNA wobble base 5-methoxycarbonylmethyl-2-thiouridinylation"/>
    <property type="evidence" value="ECO:0000250"/>
    <property type="project" value="UniProtKB"/>
</dbReference>
<dbReference type="CDD" id="cd06183">
    <property type="entry name" value="cyt_b5_reduct_like"/>
    <property type="match status" value="1"/>
</dbReference>
<dbReference type="FunFam" id="2.40.30.10:FF:000032">
    <property type="entry name" value="NADH-cytochrome b5 reductase"/>
    <property type="match status" value="1"/>
</dbReference>
<dbReference type="FunFam" id="3.40.50.80:FF:000009">
    <property type="entry name" value="NADH-cytochrome b5 reductase"/>
    <property type="match status" value="1"/>
</dbReference>
<dbReference type="Gene3D" id="3.40.50.80">
    <property type="entry name" value="Nucleotide-binding domain of ferredoxin-NADP reductase (FNR) module"/>
    <property type="match status" value="1"/>
</dbReference>
<dbReference type="Gene3D" id="2.40.30.10">
    <property type="entry name" value="Translation factors"/>
    <property type="match status" value="1"/>
</dbReference>
<dbReference type="InterPro" id="IPR001834">
    <property type="entry name" value="CBR-like"/>
</dbReference>
<dbReference type="InterPro" id="IPR008333">
    <property type="entry name" value="Cbr1-like_FAD-bd_dom"/>
</dbReference>
<dbReference type="InterPro" id="IPR017927">
    <property type="entry name" value="FAD-bd_FR_type"/>
</dbReference>
<dbReference type="InterPro" id="IPR001709">
    <property type="entry name" value="Flavoprot_Pyr_Nucl_cyt_Rdtase"/>
</dbReference>
<dbReference type="InterPro" id="IPR039261">
    <property type="entry name" value="FNR_nucleotide-bd"/>
</dbReference>
<dbReference type="InterPro" id="IPR001433">
    <property type="entry name" value="OxRdtase_FAD/NAD-bd"/>
</dbReference>
<dbReference type="InterPro" id="IPR017938">
    <property type="entry name" value="Riboflavin_synthase-like_b-brl"/>
</dbReference>
<dbReference type="PANTHER" id="PTHR19370">
    <property type="entry name" value="NADH-CYTOCHROME B5 REDUCTASE"/>
    <property type="match status" value="1"/>
</dbReference>
<dbReference type="PANTHER" id="PTHR19370:SF184">
    <property type="entry name" value="NADH-CYTOCHROME B5 REDUCTASE-LIKE"/>
    <property type="match status" value="1"/>
</dbReference>
<dbReference type="Pfam" id="PF00970">
    <property type="entry name" value="FAD_binding_6"/>
    <property type="match status" value="1"/>
</dbReference>
<dbReference type="Pfam" id="PF00175">
    <property type="entry name" value="NAD_binding_1"/>
    <property type="match status" value="1"/>
</dbReference>
<dbReference type="PRINTS" id="PR00406">
    <property type="entry name" value="CYTB5RDTASE"/>
</dbReference>
<dbReference type="PRINTS" id="PR00371">
    <property type="entry name" value="FPNCR"/>
</dbReference>
<dbReference type="SUPFAM" id="SSF52343">
    <property type="entry name" value="Ferredoxin reductase-like, C-terminal NADP-linked domain"/>
    <property type="match status" value="1"/>
</dbReference>
<dbReference type="SUPFAM" id="SSF63380">
    <property type="entry name" value="Riboflavin synthase domain-like"/>
    <property type="match status" value="1"/>
</dbReference>
<dbReference type="PROSITE" id="PS51384">
    <property type="entry name" value="FAD_FR"/>
    <property type="match status" value="1"/>
</dbReference>
<reference key="1">
    <citation type="journal article" date="2004" name="Science">
        <title>The Ashbya gossypii genome as a tool for mapping the ancient Saccharomyces cerevisiae genome.</title>
        <authorList>
            <person name="Dietrich F.S."/>
            <person name="Voegeli S."/>
            <person name="Brachat S."/>
            <person name="Lerch A."/>
            <person name="Gates K."/>
            <person name="Steiner S."/>
            <person name="Mohr C."/>
            <person name="Poehlmann R."/>
            <person name="Luedi P."/>
            <person name="Choi S."/>
            <person name="Wing R.A."/>
            <person name="Flavier A."/>
            <person name="Gaffney T.D."/>
            <person name="Philippsen P."/>
        </authorList>
    </citation>
    <scope>NUCLEOTIDE SEQUENCE [LARGE SCALE GENOMIC DNA]</scope>
    <source>
        <strain>ATCC 10895 / CBS 109.51 / FGSC 9923 / NRRL Y-1056</strain>
    </source>
</reference>
<reference key="2">
    <citation type="journal article" date="2013" name="G3 (Bethesda)">
        <title>Genomes of Ashbya fungi isolated from insects reveal four mating-type loci, numerous translocations, lack of transposons, and distinct gene duplications.</title>
        <authorList>
            <person name="Dietrich F.S."/>
            <person name="Voegeli S."/>
            <person name="Kuo S."/>
            <person name="Philippsen P."/>
        </authorList>
    </citation>
    <scope>GENOME REANNOTATION</scope>
    <source>
        <strain>ATCC 10895 / CBS 109.51 / FGSC 9923 / NRRL Y-1056</strain>
    </source>
</reference>
<comment type="function">
    <text evidence="2">NADH-dependent reductase for DPH3 and cytochrome b5. Required for the first step of diphthamide biosynthesis, a post-translational modification of histidine which occurs in elongation factor 2. DPH1 and DPH2 transfer a 3-amino-3-carboxypropyl (ACP) group from S-adenosyl-L-methionine (SAM) to a histidine residue, the reaction is assisted by a reduction system comprising DPH3 and a NADH-dependent reductase, predominantly CBR1. By reducing DPH3, also involved in the formation of the tRNA wobble base modification mcm5s 2U (5-methoxycarbonylmethyl-2-thiouridine), mediated by the elongator complex. The cytochrome b5/NADH cytochrome b5 reductase electron transfer system supports the catalytic activity of several sterol biosynthetic enzymes.</text>
</comment>
<comment type="catalytic activity">
    <reaction evidence="2">
        <text>2 Fe(III)-[cytochrome b5] + NADH = 2 Fe(II)-[cytochrome b5] + NAD(+) + H(+)</text>
        <dbReference type="Rhea" id="RHEA:46680"/>
        <dbReference type="Rhea" id="RHEA-COMP:10438"/>
        <dbReference type="Rhea" id="RHEA-COMP:10439"/>
        <dbReference type="ChEBI" id="CHEBI:15378"/>
        <dbReference type="ChEBI" id="CHEBI:29033"/>
        <dbReference type="ChEBI" id="CHEBI:29034"/>
        <dbReference type="ChEBI" id="CHEBI:57540"/>
        <dbReference type="ChEBI" id="CHEBI:57945"/>
        <dbReference type="EC" id="1.6.2.2"/>
    </reaction>
</comment>
<comment type="catalytic activity">
    <reaction evidence="2">
        <text>2 Fe(3+)-[Dph3] + NADH = 2 Fe(2+)-[Dph3] + NAD(+) + H(+)</text>
        <dbReference type="Rhea" id="RHEA:71231"/>
        <dbReference type="Rhea" id="RHEA-COMP:18002"/>
        <dbReference type="Rhea" id="RHEA-COMP:18003"/>
        <dbReference type="ChEBI" id="CHEBI:15378"/>
        <dbReference type="ChEBI" id="CHEBI:29033"/>
        <dbReference type="ChEBI" id="CHEBI:29034"/>
        <dbReference type="ChEBI" id="CHEBI:57540"/>
        <dbReference type="ChEBI" id="CHEBI:57945"/>
        <dbReference type="ChEBI" id="CHEBI:83228"/>
    </reaction>
    <physiologicalReaction direction="left-to-right" evidence="2">
        <dbReference type="Rhea" id="RHEA:71232"/>
    </physiologicalReaction>
</comment>
<comment type="cofactor">
    <cofactor evidence="3">
        <name>FAD</name>
        <dbReference type="ChEBI" id="CHEBI:57692"/>
    </cofactor>
</comment>
<comment type="pathway">
    <text evidence="2">Protein modification; peptidyl-diphthamide biosynthesis.</text>
</comment>
<comment type="subunit">
    <text evidence="2">Monomer. Component of the 2-(3-amino-3-carboxypropyl)histidine synthase complex composed of DPH1, DPH2, DPH3 and a NADH-dependent reductase, predominantly CBR1.</text>
</comment>
<comment type="subcellular location">
    <subcellularLocation>
        <location evidence="2">Mitochondrion outer membrane</location>
        <topology evidence="3">Single-pass membrane protein</topology>
    </subcellularLocation>
</comment>
<comment type="similarity">
    <text evidence="5">Belongs to the flavoprotein pyridine nucleotide cytochrome reductase family.</text>
</comment>
<sequence>MDYKFEALVTALVLAVSFIFIYGKFSGAKQSQPAVKTTLNKDWQEFSLLTKTVLTHNTAIYRFGLPEADAVLGLPIGQHISISGVIDGKEMLRSYTPTSLDSDATGYFELLVKSYEKGNISKMLAELAIGDRIKVRGPKGFYHYEPNMYKEIGMIAGGTGISPMYQIIRAIFSNPRDKTRVCLVYGNQTKDDILLKPELDAMVAAKPDQFKILYMLDKVAEGEQWEGKLGYITEAIMREHLPAPSSSAQLLLCGPPPMVSSAKRIAVSLGFEKAKPISKKGDQVFAF</sequence>
<feature type="chain" id="PRO_0000330143" description="NADH-cytochrome b5 reductase 1">
    <location>
        <begin position="1"/>
        <end position="287"/>
    </location>
</feature>
<feature type="transmembrane region" description="Helical" evidence="3">
    <location>
        <begin position="5"/>
        <end position="25"/>
    </location>
</feature>
<feature type="domain" description="FAD-binding FR-type" evidence="4">
    <location>
        <begin position="41"/>
        <end position="145"/>
    </location>
</feature>
<feature type="binding site" evidence="1">
    <location>
        <begin position="125"/>
        <end position="142"/>
    </location>
    <ligand>
        <name>FAD</name>
        <dbReference type="ChEBI" id="CHEBI:57692"/>
    </ligand>
</feature>
<feature type="binding site" evidence="1">
    <location>
        <begin position="151"/>
        <end position="183"/>
    </location>
    <ligand>
        <name>FAD</name>
        <dbReference type="ChEBI" id="CHEBI:57692"/>
    </ligand>
</feature>
<keyword id="KW-0274">FAD</keyword>
<keyword id="KW-0285">Flavoprotein</keyword>
<keyword id="KW-0472">Membrane</keyword>
<keyword id="KW-0496">Mitochondrion</keyword>
<keyword id="KW-1000">Mitochondrion outer membrane</keyword>
<keyword id="KW-0520">NAD</keyword>
<keyword id="KW-0560">Oxidoreductase</keyword>
<keyword id="KW-1185">Reference proteome</keyword>
<keyword id="KW-0808">Transferase</keyword>
<keyword id="KW-0812">Transmembrane</keyword>
<keyword id="KW-1133">Transmembrane helix</keyword>
<evidence type="ECO:0000250" key="1"/>
<evidence type="ECO:0000250" key="2">
    <source>
        <dbReference type="UniProtKB" id="P38626"/>
    </source>
</evidence>
<evidence type="ECO:0000255" key="3"/>
<evidence type="ECO:0000255" key="4">
    <source>
        <dbReference type="PROSITE-ProRule" id="PRU00716"/>
    </source>
</evidence>
<evidence type="ECO:0000305" key="5"/>
<gene>
    <name type="primary">CBR1</name>
    <name type="ordered locus">ADL087W</name>
</gene>
<protein>
    <recommendedName>
        <fullName>NADH-cytochrome b5 reductase 1</fullName>
        <ecNumber evidence="2">1.6.2.2</ecNumber>
    </recommendedName>
    <alternativeName>
        <fullName>Microsomal cytochrome b reductase</fullName>
    </alternativeName>
</protein>